<reference key="1">
    <citation type="journal article" date="2001" name="Lancet">
        <title>Whole genome sequencing of meticillin-resistant Staphylococcus aureus.</title>
        <authorList>
            <person name="Kuroda M."/>
            <person name="Ohta T."/>
            <person name="Uchiyama I."/>
            <person name="Baba T."/>
            <person name="Yuzawa H."/>
            <person name="Kobayashi I."/>
            <person name="Cui L."/>
            <person name="Oguchi A."/>
            <person name="Aoki K."/>
            <person name="Nagai Y."/>
            <person name="Lian J.-Q."/>
            <person name="Ito T."/>
            <person name="Kanamori M."/>
            <person name="Matsumaru H."/>
            <person name="Maruyama A."/>
            <person name="Murakami H."/>
            <person name="Hosoyama A."/>
            <person name="Mizutani-Ui Y."/>
            <person name="Takahashi N.K."/>
            <person name="Sawano T."/>
            <person name="Inoue R."/>
            <person name="Kaito C."/>
            <person name="Sekimizu K."/>
            <person name="Hirakawa H."/>
            <person name="Kuhara S."/>
            <person name="Goto S."/>
            <person name="Yabuzaki J."/>
            <person name="Kanehisa M."/>
            <person name="Yamashita A."/>
            <person name="Oshima K."/>
            <person name="Furuya K."/>
            <person name="Yoshino C."/>
            <person name="Shiba T."/>
            <person name="Hattori M."/>
            <person name="Ogasawara N."/>
            <person name="Hayashi H."/>
            <person name="Hiramatsu K."/>
        </authorList>
    </citation>
    <scope>NUCLEOTIDE SEQUENCE [LARGE SCALE GENOMIC DNA]</scope>
    <source>
        <strain>N315</strain>
    </source>
</reference>
<reference key="2">
    <citation type="submission" date="2007-10" db="UniProtKB">
        <title>Shotgun proteomic analysis of total and membrane protein extracts of S. aureus strain N315.</title>
        <authorList>
            <person name="Vaezzadeh A.R."/>
            <person name="Deshusses J."/>
            <person name="Lescuyer P."/>
            <person name="Hochstrasser D.F."/>
        </authorList>
    </citation>
    <scope>IDENTIFICATION BY MASS SPECTROMETRY [LARGE SCALE ANALYSIS]</scope>
    <source>
        <strain>N315</strain>
    </source>
</reference>
<sequence>MNKQNNYSDDSIQVLEGLEAVRKRPGMYIGSTDKRGLHHLVYEIVDNSVDEVLNGYGNEIDVTINKDGSISIEDNGRGMPTGIHKSGKPTVEVIFTVLHAGGKFGQGGYKTSGGLHGVGASVVNALSEWLEVEIHRDGSIYHQSFKNGGSPSSGLVKKGKTKKTGTKVTFKPDDTIFKASTSFNFDVLSERLQESAFLLKNLKITLNDLRSGKERQEHYHYEEGIKEFVSYVNEGKEVLHDVATFSGEANGIEVDVAFQYNDQYSESILSFVNNVRTKDGGTHEVGFKTAMTRVFNDYARRINELKTKDKNLDGNDIREGLTAVVSVRIPEELLQFEGQTKSKLGTSEARSAVDSVVADKLPFYLEEKGQLSKSLVKKAIKAQQAREAARKAREDARSGKKNKRKDTLLSGKLTPAQSKNTEKNELYLVEGDSAGGSAKLGRDRKFQAILPLRGKVINTEKARLEDIFKNEEINTIIHTIGAGVGTDFKIEDSNYNRVIIMTDADTDGAHIQVLLLTFFFKYMKPLVQAGRVFIALPPLYKLEKGKGKTKRVEYAWTDEELNKLQKELGKGFTLQRYKGLGEMNPEQLWETTMNPETRTLIRVQVEDEVRSSKRVTTLMGDKVQPRREWIEKHVEFGMQEDQSILDNSEVQVLENDQFDEEEI</sequence>
<comment type="function">
    <text evidence="1">Topoisomerase IV is essential for chromosome segregation. It relaxes supercoiled DNA. Performs the decatenation events required during the replication of a circular DNA molecule.</text>
</comment>
<comment type="catalytic activity">
    <reaction evidence="1">
        <text>ATP-dependent breakage, passage and rejoining of double-stranded DNA.</text>
        <dbReference type="EC" id="5.6.2.2"/>
    </reaction>
</comment>
<comment type="cofactor">
    <cofactor evidence="1">
        <name>Mg(2+)</name>
        <dbReference type="ChEBI" id="CHEBI:18420"/>
    </cofactor>
    <cofactor evidence="1">
        <name>Mn(2+)</name>
        <dbReference type="ChEBI" id="CHEBI:29035"/>
    </cofactor>
    <cofactor evidence="1">
        <name>Ca(2+)</name>
        <dbReference type="ChEBI" id="CHEBI:29108"/>
    </cofactor>
    <text evidence="1">Binds two Mg(2+) per subunit. The magnesium ions form salt bridges with both the protein and the DNA. Can also accept other divalent metal cations, such as Mn(2+) or Ca(2+).</text>
</comment>
<comment type="subunit">
    <text evidence="1">Heterotetramer composed of ParC and ParE.</text>
</comment>
<comment type="similarity">
    <text evidence="1">Belongs to the type II topoisomerase family. ParE type 2 subfamily.</text>
</comment>
<comment type="sequence caution" evidence="3">
    <conflict type="erroneous initiation">
        <sequence resource="EMBL-CDS" id="BAB42446"/>
    </conflict>
</comment>
<organism>
    <name type="scientific">Staphylococcus aureus (strain N315)</name>
    <dbReference type="NCBI Taxonomy" id="158879"/>
    <lineage>
        <taxon>Bacteria</taxon>
        <taxon>Bacillati</taxon>
        <taxon>Bacillota</taxon>
        <taxon>Bacilli</taxon>
        <taxon>Bacillales</taxon>
        <taxon>Staphylococcaceae</taxon>
        <taxon>Staphylococcus</taxon>
    </lineage>
</organism>
<dbReference type="EC" id="5.6.2.2" evidence="1"/>
<dbReference type="EMBL" id="BA000018">
    <property type="protein sequence ID" value="BAB42446.1"/>
    <property type="status" value="ALT_INIT"/>
    <property type="molecule type" value="Genomic_DNA"/>
</dbReference>
<dbReference type="PIR" id="B89911">
    <property type="entry name" value="B89911"/>
</dbReference>
<dbReference type="RefSeq" id="WP_001557340.1">
    <property type="nucleotide sequence ID" value="NC_002745.2"/>
</dbReference>
<dbReference type="SMR" id="P66939"/>
<dbReference type="EnsemblBacteria" id="BAB42446">
    <property type="protein sequence ID" value="BAB42446"/>
    <property type="gene ID" value="BAB42446"/>
</dbReference>
<dbReference type="KEGG" id="sau:SA1188"/>
<dbReference type="HOGENOM" id="CLU_006146_4_1_9"/>
<dbReference type="GO" id="GO:0005694">
    <property type="term" value="C:chromosome"/>
    <property type="evidence" value="ECO:0007669"/>
    <property type="project" value="InterPro"/>
</dbReference>
<dbReference type="GO" id="GO:0005524">
    <property type="term" value="F:ATP binding"/>
    <property type="evidence" value="ECO:0007669"/>
    <property type="project" value="UniProtKB-UniRule"/>
</dbReference>
<dbReference type="GO" id="GO:0003677">
    <property type="term" value="F:DNA binding"/>
    <property type="evidence" value="ECO:0007669"/>
    <property type="project" value="UniProtKB-UniRule"/>
</dbReference>
<dbReference type="GO" id="GO:0034335">
    <property type="term" value="F:DNA negative supercoiling activity"/>
    <property type="evidence" value="ECO:0007669"/>
    <property type="project" value="UniProtKB-ARBA"/>
</dbReference>
<dbReference type="GO" id="GO:0046872">
    <property type="term" value="F:metal ion binding"/>
    <property type="evidence" value="ECO:0007669"/>
    <property type="project" value="UniProtKB-KW"/>
</dbReference>
<dbReference type="GO" id="GO:0007059">
    <property type="term" value="P:chromosome segregation"/>
    <property type="evidence" value="ECO:0007669"/>
    <property type="project" value="UniProtKB-UniRule"/>
</dbReference>
<dbReference type="GO" id="GO:0006265">
    <property type="term" value="P:DNA topological change"/>
    <property type="evidence" value="ECO:0007669"/>
    <property type="project" value="UniProtKB-UniRule"/>
</dbReference>
<dbReference type="CDD" id="cd16928">
    <property type="entry name" value="HATPase_GyrB-like"/>
    <property type="match status" value="1"/>
</dbReference>
<dbReference type="CDD" id="cd00822">
    <property type="entry name" value="TopoII_Trans_DNA_gyrase"/>
    <property type="match status" value="1"/>
</dbReference>
<dbReference type="FunFam" id="3.30.230.10:FF:000005">
    <property type="entry name" value="DNA gyrase subunit B"/>
    <property type="match status" value="1"/>
</dbReference>
<dbReference type="FunFam" id="3.30.565.10:FF:000002">
    <property type="entry name" value="DNA gyrase subunit B"/>
    <property type="match status" value="1"/>
</dbReference>
<dbReference type="FunFam" id="3.40.50.670:FF:000002">
    <property type="entry name" value="DNA gyrase subunit B"/>
    <property type="match status" value="1"/>
</dbReference>
<dbReference type="Gene3D" id="3.30.230.10">
    <property type="match status" value="1"/>
</dbReference>
<dbReference type="Gene3D" id="3.40.50.670">
    <property type="match status" value="1"/>
</dbReference>
<dbReference type="Gene3D" id="3.30.565.10">
    <property type="entry name" value="Histidine kinase-like ATPase, C-terminal domain"/>
    <property type="match status" value="1"/>
</dbReference>
<dbReference type="HAMAP" id="MF_00939">
    <property type="entry name" value="ParE_type2"/>
    <property type="match status" value="1"/>
</dbReference>
<dbReference type="InterPro" id="IPR002288">
    <property type="entry name" value="DNA_gyrase_B_C"/>
</dbReference>
<dbReference type="InterPro" id="IPR036890">
    <property type="entry name" value="HATPase_C_sf"/>
</dbReference>
<dbReference type="InterPro" id="IPR005740">
    <property type="entry name" value="ParE_type2"/>
</dbReference>
<dbReference type="InterPro" id="IPR020568">
    <property type="entry name" value="Ribosomal_Su5_D2-typ_SF"/>
</dbReference>
<dbReference type="InterPro" id="IPR014721">
    <property type="entry name" value="Ribsml_uS5_D2-typ_fold_subgr"/>
</dbReference>
<dbReference type="InterPro" id="IPR001241">
    <property type="entry name" value="Topo_IIA"/>
</dbReference>
<dbReference type="InterPro" id="IPR013760">
    <property type="entry name" value="Topo_IIA-like_dom_sf"/>
</dbReference>
<dbReference type="InterPro" id="IPR000565">
    <property type="entry name" value="Topo_IIA_B"/>
</dbReference>
<dbReference type="InterPro" id="IPR013759">
    <property type="entry name" value="Topo_IIA_B_C"/>
</dbReference>
<dbReference type="InterPro" id="IPR013506">
    <property type="entry name" value="Topo_IIA_bsu_dom2"/>
</dbReference>
<dbReference type="InterPro" id="IPR018522">
    <property type="entry name" value="TopoIIA_CS"/>
</dbReference>
<dbReference type="InterPro" id="IPR006171">
    <property type="entry name" value="TOPRIM_dom"/>
</dbReference>
<dbReference type="NCBIfam" id="TIGR01058">
    <property type="entry name" value="parE_Gpos"/>
    <property type="match status" value="1"/>
</dbReference>
<dbReference type="NCBIfam" id="NF004189">
    <property type="entry name" value="PRK05644.1"/>
    <property type="match status" value="1"/>
</dbReference>
<dbReference type="PANTHER" id="PTHR45866">
    <property type="entry name" value="DNA GYRASE/TOPOISOMERASE SUBUNIT B"/>
    <property type="match status" value="1"/>
</dbReference>
<dbReference type="PANTHER" id="PTHR45866:SF12">
    <property type="entry name" value="DNA TOPOISOMERASE 4 SUBUNIT B"/>
    <property type="match status" value="1"/>
</dbReference>
<dbReference type="Pfam" id="PF00204">
    <property type="entry name" value="DNA_gyraseB"/>
    <property type="match status" value="1"/>
</dbReference>
<dbReference type="Pfam" id="PF00986">
    <property type="entry name" value="DNA_gyraseB_C"/>
    <property type="match status" value="1"/>
</dbReference>
<dbReference type="Pfam" id="PF02518">
    <property type="entry name" value="HATPase_c"/>
    <property type="match status" value="1"/>
</dbReference>
<dbReference type="Pfam" id="PF01751">
    <property type="entry name" value="Toprim"/>
    <property type="match status" value="1"/>
</dbReference>
<dbReference type="PRINTS" id="PR01159">
    <property type="entry name" value="DNAGYRASEB"/>
</dbReference>
<dbReference type="PRINTS" id="PR00418">
    <property type="entry name" value="TPI2FAMILY"/>
</dbReference>
<dbReference type="SMART" id="SM00387">
    <property type="entry name" value="HATPase_c"/>
    <property type="match status" value="1"/>
</dbReference>
<dbReference type="SMART" id="SM00433">
    <property type="entry name" value="TOP2c"/>
    <property type="match status" value="1"/>
</dbReference>
<dbReference type="SUPFAM" id="SSF55874">
    <property type="entry name" value="ATPase domain of HSP90 chaperone/DNA topoisomerase II/histidine kinase"/>
    <property type="match status" value="1"/>
</dbReference>
<dbReference type="SUPFAM" id="SSF54211">
    <property type="entry name" value="Ribosomal protein S5 domain 2-like"/>
    <property type="match status" value="1"/>
</dbReference>
<dbReference type="SUPFAM" id="SSF56719">
    <property type="entry name" value="Type II DNA topoisomerase"/>
    <property type="match status" value="1"/>
</dbReference>
<dbReference type="PROSITE" id="PS00177">
    <property type="entry name" value="TOPOISOMERASE_II"/>
    <property type="match status" value="1"/>
</dbReference>
<dbReference type="PROSITE" id="PS50880">
    <property type="entry name" value="TOPRIM"/>
    <property type="match status" value="1"/>
</dbReference>
<protein>
    <recommendedName>
        <fullName evidence="1">DNA topoisomerase 4 subunit B</fullName>
        <ecNumber evidence="1">5.6.2.2</ecNumber>
    </recommendedName>
    <alternativeName>
        <fullName evidence="1">Topoisomerase IV subunit B</fullName>
    </alternativeName>
</protein>
<proteinExistence type="evidence at protein level"/>
<accession>P66939</accession>
<accession>Q99UC4</accession>
<keyword id="KW-0067">ATP-binding</keyword>
<keyword id="KW-0238">DNA-binding</keyword>
<keyword id="KW-0413">Isomerase</keyword>
<keyword id="KW-0460">Magnesium</keyword>
<keyword id="KW-0479">Metal-binding</keyword>
<keyword id="KW-0547">Nucleotide-binding</keyword>
<keyword id="KW-0799">Topoisomerase</keyword>
<gene>
    <name evidence="1" type="primary">parE</name>
    <name type="synonym">grlB</name>
    <name type="ordered locus">SA1188</name>
</gene>
<feature type="chain" id="PRO_0000145436" description="DNA topoisomerase 4 subunit B">
    <location>
        <begin position="1"/>
        <end position="663"/>
    </location>
</feature>
<feature type="domain" description="Toprim" evidence="1">
    <location>
        <begin position="424"/>
        <end position="538"/>
    </location>
</feature>
<feature type="region of interest" description="Disordered" evidence="2">
    <location>
        <begin position="386"/>
        <end position="416"/>
    </location>
</feature>
<feature type="compositionally biased region" description="Basic and acidic residues" evidence="2">
    <location>
        <begin position="387"/>
        <end position="398"/>
    </location>
</feature>
<feature type="binding site" evidence="1">
    <location>
        <position position="7"/>
    </location>
    <ligand>
        <name>ATP</name>
        <dbReference type="ChEBI" id="CHEBI:30616"/>
    </ligand>
</feature>
<feature type="binding site" evidence="1">
    <location>
        <position position="47"/>
    </location>
    <ligand>
        <name>ATP</name>
        <dbReference type="ChEBI" id="CHEBI:30616"/>
    </ligand>
</feature>
<feature type="binding site" evidence="1">
    <location>
        <position position="74"/>
    </location>
    <ligand>
        <name>ATP</name>
        <dbReference type="ChEBI" id="CHEBI:30616"/>
    </ligand>
</feature>
<feature type="binding site" evidence="1">
    <location>
        <begin position="114"/>
        <end position="120"/>
    </location>
    <ligand>
        <name>ATP</name>
        <dbReference type="ChEBI" id="CHEBI:30616"/>
    </ligand>
</feature>
<feature type="binding site" evidence="1">
    <location>
        <position position="341"/>
    </location>
    <ligand>
        <name>ATP</name>
        <dbReference type="ChEBI" id="CHEBI:30616"/>
    </ligand>
</feature>
<feature type="binding site" evidence="1">
    <location>
        <position position="430"/>
    </location>
    <ligand>
        <name>Mg(2+)</name>
        <dbReference type="ChEBI" id="CHEBI:18420"/>
        <label>1</label>
        <note>catalytic</note>
    </ligand>
</feature>
<feature type="binding site" evidence="1">
    <location>
        <position position="503"/>
    </location>
    <ligand>
        <name>Mg(2+)</name>
        <dbReference type="ChEBI" id="CHEBI:18420"/>
        <label>1</label>
        <note>catalytic</note>
    </ligand>
</feature>
<feature type="binding site" evidence="1">
    <location>
        <position position="503"/>
    </location>
    <ligand>
        <name>Mg(2+)</name>
        <dbReference type="ChEBI" id="CHEBI:18420"/>
        <label>2</label>
    </ligand>
</feature>
<feature type="binding site" evidence="1">
    <location>
        <position position="505"/>
    </location>
    <ligand>
        <name>Mg(2+)</name>
        <dbReference type="ChEBI" id="CHEBI:18420"/>
        <label>2</label>
    </ligand>
</feature>
<feature type="site" description="Interaction with DNA" evidence="1">
    <location>
        <position position="455"/>
    </location>
</feature>
<feature type="site" description="Interaction with DNA" evidence="1">
    <location>
        <position position="458"/>
    </location>
</feature>
<feature type="site" description="Interaction with DNA" evidence="1">
    <location>
        <position position="510"/>
    </location>
</feature>
<feature type="site" description="Interaction with DNA" evidence="1">
    <location>
        <position position="626"/>
    </location>
</feature>
<name>PARE_STAAN</name>
<evidence type="ECO:0000255" key="1">
    <source>
        <dbReference type="HAMAP-Rule" id="MF_00939"/>
    </source>
</evidence>
<evidence type="ECO:0000256" key="2">
    <source>
        <dbReference type="SAM" id="MobiDB-lite"/>
    </source>
</evidence>
<evidence type="ECO:0000305" key="3"/>